<dbReference type="EC" id="5.4.3.8" evidence="1"/>
<dbReference type="EMBL" id="CP001091">
    <property type="protein sequence ID" value="ACE62269.1"/>
    <property type="molecule type" value="Genomic_DNA"/>
</dbReference>
<dbReference type="RefSeq" id="WP_005618034.1">
    <property type="nucleotide sequence ID" value="NC_010939.1"/>
</dbReference>
<dbReference type="SMR" id="B3GYN8"/>
<dbReference type="KEGG" id="apa:APP7_1617"/>
<dbReference type="HOGENOM" id="CLU_016922_1_5_6"/>
<dbReference type="UniPathway" id="UPA00251">
    <property type="reaction ID" value="UER00317"/>
</dbReference>
<dbReference type="Proteomes" id="UP000001226">
    <property type="component" value="Chromosome"/>
</dbReference>
<dbReference type="GO" id="GO:0005737">
    <property type="term" value="C:cytoplasm"/>
    <property type="evidence" value="ECO:0007669"/>
    <property type="project" value="UniProtKB-SubCell"/>
</dbReference>
<dbReference type="GO" id="GO:0042286">
    <property type="term" value="F:glutamate-1-semialdehyde 2,1-aminomutase activity"/>
    <property type="evidence" value="ECO:0007669"/>
    <property type="project" value="UniProtKB-UniRule"/>
</dbReference>
<dbReference type="GO" id="GO:0030170">
    <property type="term" value="F:pyridoxal phosphate binding"/>
    <property type="evidence" value="ECO:0007669"/>
    <property type="project" value="InterPro"/>
</dbReference>
<dbReference type="GO" id="GO:0008483">
    <property type="term" value="F:transaminase activity"/>
    <property type="evidence" value="ECO:0007669"/>
    <property type="project" value="InterPro"/>
</dbReference>
<dbReference type="GO" id="GO:0006782">
    <property type="term" value="P:protoporphyrinogen IX biosynthetic process"/>
    <property type="evidence" value="ECO:0007669"/>
    <property type="project" value="UniProtKB-UniRule"/>
</dbReference>
<dbReference type="CDD" id="cd00610">
    <property type="entry name" value="OAT_like"/>
    <property type="match status" value="1"/>
</dbReference>
<dbReference type="FunFam" id="3.40.640.10:FF:000021">
    <property type="entry name" value="Glutamate-1-semialdehyde 2,1-aminomutase"/>
    <property type="match status" value="1"/>
</dbReference>
<dbReference type="Gene3D" id="3.90.1150.10">
    <property type="entry name" value="Aspartate Aminotransferase, domain 1"/>
    <property type="match status" value="1"/>
</dbReference>
<dbReference type="Gene3D" id="3.40.640.10">
    <property type="entry name" value="Type I PLP-dependent aspartate aminotransferase-like (Major domain)"/>
    <property type="match status" value="1"/>
</dbReference>
<dbReference type="HAMAP" id="MF_00375">
    <property type="entry name" value="HemL_aminotrans_3"/>
    <property type="match status" value="1"/>
</dbReference>
<dbReference type="InterPro" id="IPR004639">
    <property type="entry name" value="4pyrrol_synth_GluAld_NH2Trfase"/>
</dbReference>
<dbReference type="InterPro" id="IPR005814">
    <property type="entry name" value="Aminotrans_3"/>
</dbReference>
<dbReference type="InterPro" id="IPR049704">
    <property type="entry name" value="Aminotrans_3_PPA_site"/>
</dbReference>
<dbReference type="InterPro" id="IPR015424">
    <property type="entry name" value="PyrdxlP-dep_Trfase"/>
</dbReference>
<dbReference type="InterPro" id="IPR015421">
    <property type="entry name" value="PyrdxlP-dep_Trfase_major"/>
</dbReference>
<dbReference type="InterPro" id="IPR015422">
    <property type="entry name" value="PyrdxlP-dep_Trfase_small"/>
</dbReference>
<dbReference type="NCBIfam" id="TIGR00713">
    <property type="entry name" value="hemL"/>
    <property type="match status" value="1"/>
</dbReference>
<dbReference type="NCBIfam" id="NF000818">
    <property type="entry name" value="PRK00062.1"/>
    <property type="match status" value="1"/>
</dbReference>
<dbReference type="PANTHER" id="PTHR43713">
    <property type="entry name" value="GLUTAMATE-1-SEMIALDEHYDE 2,1-AMINOMUTASE"/>
    <property type="match status" value="1"/>
</dbReference>
<dbReference type="PANTHER" id="PTHR43713:SF3">
    <property type="entry name" value="GLUTAMATE-1-SEMIALDEHYDE 2,1-AMINOMUTASE 1, CHLOROPLASTIC-RELATED"/>
    <property type="match status" value="1"/>
</dbReference>
<dbReference type="Pfam" id="PF00202">
    <property type="entry name" value="Aminotran_3"/>
    <property type="match status" value="1"/>
</dbReference>
<dbReference type="SUPFAM" id="SSF53383">
    <property type="entry name" value="PLP-dependent transferases"/>
    <property type="match status" value="1"/>
</dbReference>
<dbReference type="PROSITE" id="PS00600">
    <property type="entry name" value="AA_TRANSFER_CLASS_3"/>
    <property type="match status" value="1"/>
</dbReference>
<gene>
    <name evidence="1" type="primary">hemL</name>
    <name type="ordered locus">APP7_1617</name>
</gene>
<comment type="catalytic activity">
    <reaction evidence="1">
        <text>(S)-4-amino-5-oxopentanoate = 5-aminolevulinate</text>
        <dbReference type="Rhea" id="RHEA:14265"/>
        <dbReference type="ChEBI" id="CHEBI:57501"/>
        <dbReference type="ChEBI" id="CHEBI:356416"/>
        <dbReference type="EC" id="5.4.3.8"/>
    </reaction>
</comment>
<comment type="cofactor">
    <cofactor evidence="1">
        <name>pyridoxal 5'-phosphate</name>
        <dbReference type="ChEBI" id="CHEBI:597326"/>
    </cofactor>
</comment>
<comment type="pathway">
    <text evidence="1">Porphyrin-containing compound metabolism; protoporphyrin-IX biosynthesis; 5-aminolevulinate from L-glutamyl-tRNA(Glu): step 2/2.</text>
</comment>
<comment type="subunit">
    <text evidence="1">Homodimer.</text>
</comment>
<comment type="subcellular location">
    <subcellularLocation>
        <location evidence="1">Cytoplasm</location>
    </subcellularLocation>
</comment>
<comment type="similarity">
    <text evidence="1">Belongs to the class-III pyridoxal-phosphate-dependent aminotransferase family. HemL subfamily.</text>
</comment>
<keyword id="KW-0963">Cytoplasm</keyword>
<keyword id="KW-0413">Isomerase</keyword>
<keyword id="KW-0627">Porphyrin biosynthesis</keyword>
<keyword id="KW-0663">Pyridoxal phosphate</keyword>
<name>GSA_ACTP7</name>
<organism>
    <name type="scientific">Actinobacillus pleuropneumoniae serotype 7 (strain AP76)</name>
    <dbReference type="NCBI Taxonomy" id="537457"/>
    <lineage>
        <taxon>Bacteria</taxon>
        <taxon>Pseudomonadati</taxon>
        <taxon>Pseudomonadota</taxon>
        <taxon>Gammaproteobacteria</taxon>
        <taxon>Pasteurellales</taxon>
        <taxon>Pasteurellaceae</taxon>
        <taxon>Actinobacillus</taxon>
    </lineage>
</organism>
<reference key="1">
    <citation type="submission" date="2008-06" db="EMBL/GenBank/DDBJ databases">
        <title>Genome and proteome analysis of A. pleuropneumoniae serotype 7.</title>
        <authorList>
            <person name="Linke B."/>
            <person name="Buettner F."/>
            <person name="Martinez-Arias R."/>
            <person name="Goesmann A."/>
            <person name="Baltes N."/>
            <person name="Tegetmeyer H."/>
            <person name="Singh M."/>
            <person name="Gerlach G.F."/>
        </authorList>
    </citation>
    <scope>NUCLEOTIDE SEQUENCE [LARGE SCALE GENOMIC DNA]</scope>
    <source>
        <strain>AP76</strain>
    </source>
</reference>
<proteinExistence type="inferred from homology"/>
<sequence>MSKSEQLFEKAQKVIPGGVNSPVRAFKGVGGTPVFIQKAEGAYITDSDGKKYIDYVGSWGPMVLGHNHPAIIDAVLKAVPNGLSFGAPTESEITLAELVTKLVPSIELVRMVSSGTEATMSAIRLARGYTGRDKIIKFEGCYHGHSDSLLVKAGSGALTLGQPSGPGVPADFAKHTLTCTYNDLDSVKTAFEQYPNEIACLIVEPVAGNMNCIPPKNDFLKGLRALCDQYGAVFIIDEVMTGFRVALGGAQAYYDVKPDLTTLGKIIGGGMPVGAFGGKKEIMEYIAPTGPVYQAGTLSGNPIAMAAGLACLTELSKAGNEEKLAAQTKTLAEGFKALADKHNVPFTAQYVGGMFGLFFTEQAEITNFQEVMKCDAAKFNRFFHLMLEQGVYLAPSAFEAGFMSLAHSDEDIQATLVAADKAFAQL</sequence>
<accession>B3GYN8</accession>
<protein>
    <recommendedName>
        <fullName evidence="1">Glutamate-1-semialdehyde 2,1-aminomutase</fullName>
        <shortName evidence="1">GSA</shortName>
        <ecNumber evidence="1">5.4.3.8</ecNumber>
    </recommendedName>
    <alternativeName>
        <fullName evidence="1">Glutamate-1-semialdehyde aminotransferase</fullName>
        <shortName evidence="1">GSA-AT</shortName>
    </alternativeName>
</protein>
<feature type="chain" id="PRO_1000121853" description="Glutamate-1-semialdehyde 2,1-aminomutase">
    <location>
        <begin position="1"/>
        <end position="426"/>
    </location>
</feature>
<feature type="modified residue" description="N6-(pyridoxal phosphate)lysine" evidence="1">
    <location>
        <position position="265"/>
    </location>
</feature>
<evidence type="ECO:0000255" key="1">
    <source>
        <dbReference type="HAMAP-Rule" id="MF_00375"/>
    </source>
</evidence>